<dbReference type="EC" id="2.3.1.274" evidence="1"/>
<dbReference type="EMBL" id="AE017180">
    <property type="protein sequence ID" value="AAR34974.1"/>
    <property type="molecule type" value="Genomic_DNA"/>
</dbReference>
<dbReference type="RefSeq" id="NP_952651.1">
    <property type="nucleotide sequence ID" value="NC_002939.5"/>
</dbReference>
<dbReference type="RefSeq" id="WP_010942245.1">
    <property type="nucleotide sequence ID" value="NC_002939.5"/>
</dbReference>
<dbReference type="SMR" id="Q74CS2"/>
<dbReference type="FunCoup" id="Q74CS2">
    <property type="interactions" value="335"/>
</dbReference>
<dbReference type="STRING" id="243231.GSU1600"/>
<dbReference type="EnsemblBacteria" id="AAR34974">
    <property type="protein sequence ID" value="AAR34974"/>
    <property type="gene ID" value="GSU1600"/>
</dbReference>
<dbReference type="KEGG" id="gsu:GSU1600"/>
<dbReference type="PATRIC" id="fig|243231.5.peg.1642"/>
<dbReference type="eggNOG" id="COG0416">
    <property type="taxonomic scope" value="Bacteria"/>
</dbReference>
<dbReference type="HOGENOM" id="CLU_039379_1_1_7"/>
<dbReference type="InParanoid" id="Q74CS2"/>
<dbReference type="OrthoDB" id="9806408at2"/>
<dbReference type="UniPathway" id="UPA00085"/>
<dbReference type="Proteomes" id="UP000000577">
    <property type="component" value="Chromosome"/>
</dbReference>
<dbReference type="GO" id="GO:0005737">
    <property type="term" value="C:cytoplasm"/>
    <property type="evidence" value="ECO:0007669"/>
    <property type="project" value="UniProtKB-SubCell"/>
</dbReference>
<dbReference type="GO" id="GO:0043811">
    <property type="term" value="F:phosphate:acyl-[acyl carrier protein] acyltransferase activity"/>
    <property type="evidence" value="ECO:0007669"/>
    <property type="project" value="UniProtKB-UniRule"/>
</dbReference>
<dbReference type="GO" id="GO:0006633">
    <property type="term" value="P:fatty acid biosynthetic process"/>
    <property type="evidence" value="ECO:0007669"/>
    <property type="project" value="UniProtKB-UniRule"/>
</dbReference>
<dbReference type="GO" id="GO:0008654">
    <property type="term" value="P:phospholipid biosynthetic process"/>
    <property type="evidence" value="ECO:0007669"/>
    <property type="project" value="UniProtKB-KW"/>
</dbReference>
<dbReference type="Gene3D" id="3.40.718.10">
    <property type="entry name" value="Isopropylmalate Dehydrogenase"/>
    <property type="match status" value="1"/>
</dbReference>
<dbReference type="HAMAP" id="MF_00019">
    <property type="entry name" value="PlsX"/>
    <property type="match status" value="1"/>
</dbReference>
<dbReference type="InterPro" id="IPR003664">
    <property type="entry name" value="FA_synthesis"/>
</dbReference>
<dbReference type="InterPro" id="IPR012281">
    <property type="entry name" value="Phospholipid_synth_PlsX-like"/>
</dbReference>
<dbReference type="NCBIfam" id="TIGR00182">
    <property type="entry name" value="plsX"/>
    <property type="match status" value="1"/>
</dbReference>
<dbReference type="PANTHER" id="PTHR30100">
    <property type="entry name" value="FATTY ACID/PHOSPHOLIPID SYNTHESIS PROTEIN PLSX"/>
    <property type="match status" value="1"/>
</dbReference>
<dbReference type="PANTHER" id="PTHR30100:SF1">
    <property type="entry name" value="PHOSPHATE ACYLTRANSFERASE"/>
    <property type="match status" value="1"/>
</dbReference>
<dbReference type="Pfam" id="PF02504">
    <property type="entry name" value="FA_synthesis"/>
    <property type="match status" value="1"/>
</dbReference>
<dbReference type="PIRSF" id="PIRSF002465">
    <property type="entry name" value="Phsphlp_syn_PlsX"/>
    <property type="match status" value="1"/>
</dbReference>
<dbReference type="SUPFAM" id="SSF53659">
    <property type="entry name" value="Isocitrate/Isopropylmalate dehydrogenase-like"/>
    <property type="match status" value="1"/>
</dbReference>
<evidence type="ECO:0000255" key="1">
    <source>
        <dbReference type="HAMAP-Rule" id="MF_00019"/>
    </source>
</evidence>
<protein>
    <recommendedName>
        <fullName evidence="1">Phosphate acyltransferase</fullName>
        <ecNumber evidence="1">2.3.1.274</ecNumber>
    </recommendedName>
    <alternativeName>
        <fullName evidence="1">Acyl-ACP phosphotransacylase</fullName>
    </alternativeName>
    <alternativeName>
        <fullName evidence="1">Acyl-[acyl-carrier-protein]--phosphate acyltransferase</fullName>
    </alternativeName>
    <alternativeName>
        <fullName evidence="1">Phosphate-acyl-ACP acyltransferase</fullName>
    </alternativeName>
</protein>
<proteinExistence type="inferred from homology"/>
<gene>
    <name evidence="1" type="primary">plsX</name>
    <name type="ordered locus">GSU1600</name>
</gene>
<sequence length="346" mass="37246">MRVAVDAMGGDNAPAVEVEGAVVAAREFGIPITLVGDTEKLRLELAKHNVQGLDIAIHHASEVVGMHDAASDAVRRKKDSSIRVAFDLVKSGEAEAVVSAGNSGATMAAGMFVLKRLKGIDRPAIAQIFPTLRGKTLVLDVGGNVDCKPIHLVQFAIMGEVYARHVIGVEQPRIGLLSNGEEDSKGNELTRETNAILKNISFDYEGYVEGRDIFNGMVDVVVCDGFVGNVVLKLSEGLAETVGKMLREEIASSLLSKLGYLFVRKAFKNFKKKVDYAEYGGAPLIGINGVAMICHGGSNVKAIKNAIHFAHEYVRKGVNQRLAEKMETEFTAYMQQFDAVKEAVAG</sequence>
<feature type="chain" id="PRO_0000189883" description="Phosphate acyltransferase">
    <location>
        <begin position="1"/>
        <end position="346"/>
    </location>
</feature>
<keyword id="KW-0963">Cytoplasm</keyword>
<keyword id="KW-0444">Lipid biosynthesis</keyword>
<keyword id="KW-0443">Lipid metabolism</keyword>
<keyword id="KW-0594">Phospholipid biosynthesis</keyword>
<keyword id="KW-1208">Phospholipid metabolism</keyword>
<keyword id="KW-1185">Reference proteome</keyword>
<keyword id="KW-0808">Transferase</keyword>
<organism>
    <name type="scientific">Geobacter sulfurreducens (strain ATCC 51573 / DSM 12127 / PCA)</name>
    <dbReference type="NCBI Taxonomy" id="243231"/>
    <lineage>
        <taxon>Bacteria</taxon>
        <taxon>Pseudomonadati</taxon>
        <taxon>Thermodesulfobacteriota</taxon>
        <taxon>Desulfuromonadia</taxon>
        <taxon>Geobacterales</taxon>
        <taxon>Geobacteraceae</taxon>
        <taxon>Geobacter</taxon>
    </lineage>
</organism>
<comment type="function">
    <text evidence="1">Catalyzes the reversible formation of acyl-phosphate (acyl-PO(4)) from acyl-[acyl-carrier-protein] (acyl-ACP). This enzyme utilizes acyl-ACP as fatty acyl donor, but not acyl-CoA.</text>
</comment>
<comment type="catalytic activity">
    <reaction evidence="1">
        <text>a fatty acyl-[ACP] + phosphate = an acyl phosphate + holo-[ACP]</text>
        <dbReference type="Rhea" id="RHEA:42292"/>
        <dbReference type="Rhea" id="RHEA-COMP:9685"/>
        <dbReference type="Rhea" id="RHEA-COMP:14125"/>
        <dbReference type="ChEBI" id="CHEBI:43474"/>
        <dbReference type="ChEBI" id="CHEBI:59918"/>
        <dbReference type="ChEBI" id="CHEBI:64479"/>
        <dbReference type="ChEBI" id="CHEBI:138651"/>
        <dbReference type="EC" id="2.3.1.274"/>
    </reaction>
</comment>
<comment type="pathway">
    <text evidence="1">Lipid metabolism; phospholipid metabolism.</text>
</comment>
<comment type="subunit">
    <text evidence="1">Homodimer. Probably interacts with PlsY.</text>
</comment>
<comment type="subcellular location">
    <subcellularLocation>
        <location evidence="1">Cytoplasm</location>
    </subcellularLocation>
    <text evidence="1">Associated with the membrane possibly through PlsY.</text>
</comment>
<comment type="similarity">
    <text evidence="1">Belongs to the PlsX family.</text>
</comment>
<accession>Q74CS2</accession>
<reference key="1">
    <citation type="journal article" date="2003" name="Science">
        <title>Genome of Geobacter sulfurreducens: metal reduction in subsurface environments.</title>
        <authorList>
            <person name="Methe B.A."/>
            <person name="Nelson K.E."/>
            <person name="Eisen J.A."/>
            <person name="Paulsen I.T."/>
            <person name="Nelson W.C."/>
            <person name="Heidelberg J.F."/>
            <person name="Wu D."/>
            <person name="Wu M."/>
            <person name="Ward N.L."/>
            <person name="Beanan M.J."/>
            <person name="Dodson R.J."/>
            <person name="Madupu R."/>
            <person name="Brinkac L.M."/>
            <person name="Daugherty S.C."/>
            <person name="DeBoy R.T."/>
            <person name="Durkin A.S."/>
            <person name="Gwinn M.L."/>
            <person name="Kolonay J.F."/>
            <person name="Sullivan S.A."/>
            <person name="Haft D.H."/>
            <person name="Selengut J."/>
            <person name="Davidsen T.M."/>
            <person name="Zafar N."/>
            <person name="White O."/>
            <person name="Tran B."/>
            <person name="Romero C."/>
            <person name="Forberger H.A."/>
            <person name="Weidman J.F."/>
            <person name="Khouri H.M."/>
            <person name="Feldblyum T.V."/>
            <person name="Utterback T.R."/>
            <person name="Van Aken S.E."/>
            <person name="Lovley D.R."/>
            <person name="Fraser C.M."/>
        </authorList>
    </citation>
    <scope>NUCLEOTIDE SEQUENCE [LARGE SCALE GENOMIC DNA]</scope>
    <source>
        <strain>ATCC 51573 / DSM 12127 / PCA</strain>
    </source>
</reference>
<name>PLSX_GEOSL</name>